<feature type="chain" id="PRO_0000356222" description="Nuclear receptor coactivator 2">
    <location>
        <begin position="1"/>
        <end position="1440"/>
    </location>
</feature>
<feature type="domain" description="bHLH" evidence="6">
    <location>
        <begin position="26"/>
        <end position="83"/>
    </location>
</feature>
<feature type="domain" description="PAS" evidence="5">
    <location>
        <begin position="112"/>
        <end position="183"/>
    </location>
</feature>
<feature type="region of interest" description="Disordered" evidence="7">
    <location>
        <begin position="1"/>
        <end position="40"/>
    </location>
</feature>
<feature type="region of interest" description="Disordered" evidence="7">
    <location>
        <begin position="388"/>
        <end position="409"/>
    </location>
</feature>
<feature type="region of interest" description="Disordered" evidence="7">
    <location>
        <begin position="453"/>
        <end position="521"/>
    </location>
</feature>
<feature type="region of interest" description="Disordered" evidence="7">
    <location>
        <begin position="539"/>
        <end position="571"/>
    </location>
</feature>
<feature type="region of interest" description="Disordered" evidence="7">
    <location>
        <begin position="583"/>
        <end position="656"/>
    </location>
</feature>
<feature type="region of interest" description="Disordered" evidence="7">
    <location>
        <begin position="704"/>
        <end position="731"/>
    </location>
</feature>
<feature type="region of interest" description="Disordered" evidence="7">
    <location>
        <begin position="948"/>
        <end position="970"/>
    </location>
</feature>
<feature type="region of interest" description="Disordered" evidence="7">
    <location>
        <begin position="1287"/>
        <end position="1306"/>
    </location>
</feature>
<feature type="short sequence motif" description="LXXLL motif 1" evidence="4">
    <location>
        <begin position="631"/>
        <end position="635"/>
    </location>
</feature>
<feature type="short sequence motif" description="LXXLL motif 2" evidence="4">
    <location>
        <begin position="684"/>
        <end position="688"/>
    </location>
</feature>
<feature type="short sequence motif" description="LXXLL motif 3" evidence="4">
    <location>
        <begin position="739"/>
        <end position="743"/>
    </location>
</feature>
<feature type="short sequence motif" description="LLXXLXXXL motif" evidence="4">
    <location>
        <begin position="1074"/>
        <end position="1082"/>
    </location>
</feature>
<feature type="compositionally biased region" description="Polar residues" evidence="7">
    <location>
        <begin position="511"/>
        <end position="521"/>
    </location>
</feature>
<feature type="compositionally biased region" description="Polar residues" evidence="7">
    <location>
        <begin position="555"/>
        <end position="564"/>
    </location>
</feature>
<feature type="compositionally biased region" description="Polar residues" evidence="7">
    <location>
        <begin position="607"/>
        <end position="619"/>
    </location>
</feature>
<feature type="compositionally biased region" description="Low complexity" evidence="7">
    <location>
        <begin position="625"/>
        <end position="639"/>
    </location>
</feature>
<feature type="compositionally biased region" description="Polar residues" evidence="7">
    <location>
        <begin position="1292"/>
        <end position="1306"/>
    </location>
</feature>
<proteinExistence type="evidence at transcript level"/>
<dbReference type="EMBL" id="BC168483">
    <property type="protein sequence ID" value="AAI68483.1"/>
    <property type="molecule type" value="mRNA"/>
</dbReference>
<dbReference type="RefSeq" id="NP_001135631.1">
    <property type="nucleotide sequence ID" value="NM_001142159.1"/>
</dbReference>
<dbReference type="SMR" id="B5DE09"/>
<dbReference type="FunCoup" id="B5DE09">
    <property type="interactions" value="2513"/>
</dbReference>
<dbReference type="STRING" id="8364.ENSXETP00000018233"/>
<dbReference type="PaxDb" id="8364-ENSXETP00000034772"/>
<dbReference type="GeneID" id="100216190"/>
<dbReference type="KEGG" id="xtr:100216190"/>
<dbReference type="AGR" id="Xenbase:XB-GENE-482311"/>
<dbReference type="CTD" id="10499"/>
<dbReference type="Xenbase" id="XB-GENE-482311">
    <property type="gene designation" value="ncoa2"/>
</dbReference>
<dbReference type="eggNOG" id="KOG3561">
    <property type="taxonomic scope" value="Eukaryota"/>
</dbReference>
<dbReference type="InParanoid" id="B5DE09"/>
<dbReference type="OMA" id="PIMPNAQ"/>
<dbReference type="OrthoDB" id="10035882at2759"/>
<dbReference type="Reactome" id="R-XTR-159418">
    <property type="pathway name" value="Recycling of bile acids and salts"/>
</dbReference>
<dbReference type="Reactome" id="R-XTR-192105">
    <property type="pathway name" value="Synthesis of bile acids and bile salts"/>
</dbReference>
<dbReference type="Reactome" id="R-XTR-193368">
    <property type="pathway name" value="Synthesis of bile acids and bile salts via 7alpha-hydroxycholesterol"/>
</dbReference>
<dbReference type="Reactome" id="R-XTR-193807">
    <property type="pathway name" value="Synthesis of bile acids and bile salts via 27-hydroxycholesterol"/>
</dbReference>
<dbReference type="Reactome" id="R-XTR-211976">
    <property type="pathway name" value="Endogenous sterols"/>
</dbReference>
<dbReference type="Reactome" id="R-XTR-3214847">
    <property type="pathway name" value="HATs acetylate histones"/>
</dbReference>
<dbReference type="Reactome" id="R-XTR-9018519">
    <property type="pathway name" value="Estrogen-dependent gene expression"/>
</dbReference>
<dbReference type="Proteomes" id="UP000008143">
    <property type="component" value="Chromosome 6"/>
</dbReference>
<dbReference type="GO" id="GO:0005634">
    <property type="term" value="C:nucleus"/>
    <property type="evidence" value="ECO:0000250"/>
    <property type="project" value="UniProtKB"/>
</dbReference>
<dbReference type="GO" id="GO:0046966">
    <property type="term" value="F:nuclear thyroid hormone receptor binding"/>
    <property type="evidence" value="ECO:0000250"/>
    <property type="project" value="UniProtKB"/>
</dbReference>
<dbReference type="GO" id="GO:0046983">
    <property type="term" value="F:protein dimerization activity"/>
    <property type="evidence" value="ECO:0007669"/>
    <property type="project" value="InterPro"/>
</dbReference>
<dbReference type="GO" id="GO:0003713">
    <property type="term" value="F:transcription coactivator activity"/>
    <property type="evidence" value="ECO:0000250"/>
    <property type="project" value="UniProtKB"/>
</dbReference>
<dbReference type="GO" id="GO:0009792">
    <property type="term" value="P:embryo development ending in birth or egg hatching"/>
    <property type="evidence" value="ECO:0000250"/>
    <property type="project" value="UniProtKB"/>
</dbReference>
<dbReference type="GO" id="GO:0035556">
    <property type="term" value="P:intracellular signal transduction"/>
    <property type="evidence" value="ECO:0000250"/>
    <property type="project" value="UniProtKB"/>
</dbReference>
<dbReference type="GO" id="GO:0006355">
    <property type="term" value="P:regulation of DNA-templated transcription"/>
    <property type="evidence" value="ECO:0000250"/>
    <property type="project" value="UniProtKB"/>
</dbReference>
<dbReference type="GO" id="GO:0019216">
    <property type="term" value="P:regulation of lipid metabolic process"/>
    <property type="evidence" value="ECO:0000250"/>
    <property type="project" value="UniProtKB"/>
</dbReference>
<dbReference type="GO" id="GO:0048511">
    <property type="term" value="P:rhythmic process"/>
    <property type="evidence" value="ECO:0007669"/>
    <property type="project" value="UniProtKB-KW"/>
</dbReference>
<dbReference type="CDD" id="cd18950">
    <property type="entry name" value="bHLH-PAS_NCoA2_SRC2"/>
    <property type="match status" value="1"/>
</dbReference>
<dbReference type="CDD" id="cd00130">
    <property type="entry name" value="PAS"/>
    <property type="match status" value="1"/>
</dbReference>
<dbReference type="FunFam" id="3.30.450.20:FF:000007">
    <property type="entry name" value="Nuclear receptor coactivator"/>
    <property type="match status" value="1"/>
</dbReference>
<dbReference type="FunFam" id="3.30.450.20:FF:000008">
    <property type="entry name" value="Nuclear receptor coactivator"/>
    <property type="match status" value="1"/>
</dbReference>
<dbReference type="FunFam" id="4.10.280.10:FF:000008">
    <property type="entry name" value="Nuclear receptor coactivator"/>
    <property type="match status" value="1"/>
</dbReference>
<dbReference type="Gene3D" id="4.10.280.10">
    <property type="entry name" value="Helix-loop-helix DNA-binding domain"/>
    <property type="match status" value="1"/>
</dbReference>
<dbReference type="Gene3D" id="6.10.140.20">
    <property type="entry name" value="Nuclear receptor coactivator, Ncoa-type, interlocking domain"/>
    <property type="match status" value="1"/>
</dbReference>
<dbReference type="Gene3D" id="3.30.450.20">
    <property type="entry name" value="PAS domain"/>
    <property type="match status" value="2"/>
</dbReference>
<dbReference type="InterPro" id="IPR011598">
    <property type="entry name" value="bHLH_dom"/>
</dbReference>
<dbReference type="InterPro" id="IPR056193">
    <property type="entry name" value="bHLH_NCOA1-3"/>
</dbReference>
<dbReference type="InterPro" id="IPR036638">
    <property type="entry name" value="HLH_DNA-bd_sf"/>
</dbReference>
<dbReference type="InterPro" id="IPR010011">
    <property type="entry name" value="NCO_DUF1518"/>
</dbReference>
<dbReference type="InterPro" id="IPR032565">
    <property type="entry name" value="NCOA2/3_DUF4927"/>
</dbReference>
<dbReference type="InterPro" id="IPR028822">
    <property type="entry name" value="NCOA2_bHLH"/>
</dbReference>
<dbReference type="InterPro" id="IPR009110">
    <property type="entry name" value="Nuc_rcpt_coact"/>
</dbReference>
<dbReference type="InterPro" id="IPR014920">
    <property type="entry name" value="Nuc_rcpt_coact_Ncoa-typ"/>
</dbReference>
<dbReference type="InterPro" id="IPR037077">
    <property type="entry name" value="Nuc_rcpt_coact_Ncoa_int_sf"/>
</dbReference>
<dbReference type="InterPro" id="IPR017426">
    <property type="entry name" value="Nuclear_rcpt_coactivator"/>
</dbReference>
<dbReference type="InterPro" id="IPR000014">
    <property type="entry name" value="PAS"/>
</dbReference>
<dbReference type="InterPro" id="IPR035965">
    <property type="entry name" value="PAS-like_dom_sf"/>
</dbReference>
<dbReference type="InterPro" id="IPR013767">
    <property type="entry name" value="PAS_fold"/>
</dbReference>
<dbReference type="InterPro" id="IPR014935">
    <property type="entry name" value="SRC/p160_LXXLL"/>
</dbReference>
<dbReference type="PANTHER" id="PTHR10684">
    <property type="entry name" value="NUCLEAR RECEPTOR COACTIVATOR"/>
    <property type="match status" value="1"/>
</dbReference>
<dbReference type="PANTHER" id="PTHR10684:SF2">
    <property type="entry name" value="NUCLEAR RECEPTOR COACTIVATOR 2"/>
    <property type="match status" value="1"/>
</dbReference>
<dbReference type="Pfam" id="PF23172">
    <property type="entry name" value="bHLH_NCOA"/>
    <property type="match status" value="1"/>
</dbReference>
<dbReference type="Pfam" id="PF07469">
    <property type="entry name" value="DUF1518"/>
    <property type="match status" value="1"/>
</dbReference>
<dbReference type="Pfam" id="PF16279">
    <property type="entry name" value="DUF4927"/>
    <property type="match status" value="1"/>
</dbReference>
<dbReference type="Pfam" id="PF16665">
    <property type="entry name" value="NCOA_u2"/>
    <property type="match status" value="1"/>
</dbReference>
<dbReference type="Pfam" id="PF08815">
    <property type="entry name" value="Nuc_rec_co-act"/>
    <property type="match status" value="1"/>
</dbReference>
<dbReference type="Pfam" id="PF00989">
    <property type="entry name" value="PAS"/>
    <property type="match status" value="1"/>
</dbReference>
<dbReference type="Pfam" id="PF14598">
    <property type="entry name" value="PAS_11"/>
    <property type="match status" value="1"/>
</dbReference>
<dbReference type="Pfam" id="PF08832">
    <property type="entry name" value="SRC-1"/>
    <property type="match status" value="1"/>
</dbReference>
<dbReference type="PIRSF" id="PIRSF038181">
    <property type="entry name" value="Nuclear_receptor_coactivator"/>
    <property type="match status" value="1"/>
</dbReference>
<dbReference type="SMART" id="SM01151">
    <property type="entry name" value="DUF1518"/>
    <property type="match status" value="1"/>
</dbReference>
<dbReference type="SMART" id="SM00353">
    <property type="entry name" value="HLH"/>
    <property type="match status" value="1"/>
</dbReference>
<dbReference type="SMART" id="SM00091">
    <property type="entry name" value="PAS"/>
    <property type="match status" value="1"/>
</dbReference>
<dbReference type="SUPFAM" id="SSF47459">
    <property type="entry name" value="HLH, helix-loop-helix DNA-binding domain"/>
    <property type="match status" value="1"/>
</dbReference>
<dbReference type="SUPFAM" id="SSF69125">
    <property type="entry name" value="Nuclear receptor coactivator interlocking domain"/>
    <property type="match status" value="1"/>
</dbReference>
<dbReference type="SUPFAM" id="SSF55785">
    <property type="entry name" value="PYP-like sensor domain (PAS domain)"/>
    <property type="match status" value="2"/>
</dbReference>
<dbReference type="PROSITE" id="PS50888">
    <property type="entry name" value="BHLH"/>
    <property type="match status" value="1"/>
</dbReference>
<dbReference type="PROSITE" id="PS50112">
    <property type="entry name" value="PAS"/>
    <property type="match status" value="1"/>
</dbReference>
<evidence type="ECO:0000250" key="1">
    <source>
        <dbReference type="UniProtKB" id="Q15596"/>
    </source>
</evidence>
<evidence type="ECO:0000250" key="2">
    <source>
        <dbReference type="UniProtKB" id="Q61026"/>
    </source>
</evidence>
<evidence type="ECO:0000250" key="3">
    <source>
        <dbReference type="UniProtKB" id="Q9W705"/>
    </source>
</evidence>
<evidence type="ECO:0000255" key="4"/>
<evidence type="ECO:0000255" key="5">
    <source>
        <dbReference type="PROSITE-ProRule" id="PRU00140"/>
    </source>
</evidence>
<evidence type="ECO:0000255" key="6">
    <source>
        <dbReference type="PROSITE-ProRule" id="PRU00981"/>
    </source>
</evidence>
<evidence type="ECO:0000256" key="7">
    <source>
        <dbReference type="SAM" id="MobiDB-lite"/>
    </source>
</evidence>
<evidence type="ECO:0000312" key="8">
    <source>
        <dbReference type="EMBL" id="AAI68483.1"/>
    </source>
</evidence>
<comment type="function">
    <text evidence="1 2 3">Transcriptional coactivator for steroid receptors and nuclear receptors. Coactivator of the steroid binding domain (AF-2) but not of the modulating N-terminal domain (AF-1). Required in a nuclear receptor pathway to suppress expression of dorsal mesoderm genes. May play a role in the positive regulation of the circadian clock.</text>
</comment>
<comment type="subcellular location">
    <subcellularLocation>
        <location evidence="1">Nucleus</location>
    </subcellularLocation>
</comment>
<comment type="domain">
    <text evidence="1">Contains three Leu-Xaa-Xaa-Leu-Leu (LXXLL) motifs. The LXXLL motifs are essential for the association with nuclear receptors and are, at least in part, functionally redundant.</text>
</comment>
<comment type="domain">
    <text evidence="1">The LLXXLXXXL motif is involved in transcriptional coactivation and CREBBP/CBP binding.</text>
</comment>
<comment type="domain">
    <text evidence="1">Contains 2 C-terminal transcription activation domains (AD1 and AD2) that can function independently.</text>
</comment>
<comment type="similarity">
    <text evidence="4">Belongs to the SRC/p160 nuclear receptor coactivator family.</text>
</comment>
<keyword id="KW-0010">Activator</keyword>
<keyword id="KW-0090">Biological rhythms</keyword>
<keyword id="KW-0217">Developmental protein</keyword>
<keyword id="KW-0539">Nucleus</keyword>
<keyword id="KW-1185">Reference proteome</keyword>
<keyword id="KW-0677">Repeat</keyword>
<keyword id="KW-0804">Transcription</keyword>
<keyword id="KW-0805">Transcription regulation</keyword>
<organism>
    <name type="scientific">Xenopus tropicalis</name>
    <name type="common">Western clawed frog</name>
    <name type="synonym">Silurana tropicalis</name>
    <dbReference type="NCBI Taxonomy" id="8364"/>
    <lineage>
        <taxon>Eukaryota</taxon>
        <taxon>Metazoa</taxon>
        <taxon>Chordata</taxon>
        <taxon>Craniata</taxon>
        <taxon>Vertebrata</taxon>
        <taxon>Euteleostomi</taxon>
        <taxon>Amphibia</taxon>
        <taxon>Batrachia</taxon>
        <taxon>Anura</taxon>
        <taxon>Pipoidea</taxon>
        <taxon>Pipidae</taxon>
        <taxon>Xenopodinae</taxon>
        <taxon>Xenopus</taxon>
        <taxon>Silurana</taxon>
    </lineage>
</organism>
<reference evidence="8" key="1">
    <citation type="submission" date="2008-08" db="EMBL/GenBank/DDBJ databases">
        <authorList>
            <consortium name="NIH - Xenopus Gene Collection (XGC) project"/>
        </authorList>
    </citation>
    <scope>NUCLEOTIDE SEQUENCE [LARGE SCALE MRNA]</scope>
    <source>
        <tissue evidence="8">Testis</tissue>
    </source>
</reference>
<name>NCOA2_XENTR</name>
<sequence length="1440" mass="157293">MSGMGENPSDPSRAEPRKRKESIDQLGPSPKRSTEKRNREQENKYIEELAELIFANFNDIDNLNFKPDKCAILKETVKQIRQIKEHEKTAAANEDEVQKADVSSTGQSVIDKDALGPMMLEALDGFFFVVNREGNVVFVSENVTQYLRYNQEELMNTSVYSILHVGDHSEFIKNLLPKSIVNGGPRRNSHTFNCRMLVKPMMECEEEGHDGQETHQKYETMQCFAVSQPKSIKEEGEDFQSCLICVARRVPMKERPVPPPSESFTTRQDLQGKITSLDTTNMRALMRPGWEDLVRRCIQRFHSQHDGEISYSKRHHQEVLRQGHATSPFYRFALSDGTTVLAHTKSKLMRSQTTNEPQLVLSLHVLQREQNMCGLNQDLAGQAMGKTLNPVQSSSPAHQAMYGGNPGQDTTISSNMNYAITGPKEQMGMAAGRFVGSGGMNHISSLQATTPQGNNYALKINSPSQGSPGMGQGQPNSMLSPRHRVSPGVAGSPRIAPSQFSPAGSLHSPVSVCSSTGNSHSYTNSSLNALQALSEGHGVPLAPPLSSPDLKVGNVQHSPVNMNPPQLRKMGSIDSKESFGLYGEQPESAAGQGESGCHSNEQKDCSENLSSVGDQTEGQSRLLDSKGQQKLLKLLTTKSDQMEPSPLPSNTLGDMNKDSLSNFASNSMSASAHGTSLKEKHKILHRLLQDSSSPVDLAKLTAEATGKELSQESNSTGPGSEVTIKQEPVSPKKKEHALLRYLLDKDDTKDNVADITPKLERPDVKVEPTSCPKLLSVKAEKEEPSFGHSDQLMPPGSDLDNLDEILDDLQNSQLSQLFPDARHDGSNSADKQAIMNDLMQLAGDNSTGLPAGAHKQRMIRIQQNNGFSSQLAAQLGRLPNQSLPLDINLQSQVSAGSFPPMRNSAPYTTVSQSVVMNNQAMMGSQGNVSNSSPGIIGVNGPRPALKPGDWGSQASAVRPACPTPSTAINRPIQDLTRSPTASIPMRPGGQVCPRQVLQSPVINMGSSELDMNIGGPQYTQQQAPPNQTAPWPDSILPIDQPSFNNQNRQPFGSPADDLICQPIASQSPTDDGNLLDQLYMALRNFDGLEEIDRALGIPEMVSQGQAVEQESFVSPESNLMMEQKPPLYNHAYANQGQMAQNSYTPMQDPGFNPMGQRPSYGILRMQNRPGLRPTGMVQNQPNQLRLQLQHRLQAQNRQPIMNPINNVSNMNLAMRPGVPGQLREQGPINAQMLAQRQRELLSQHLRQKQLQQQQQQQQQQQQQVQQHRAMMMRGQGLAMPPNMVGSGGIPASINSPRIPQGNTQQFPFPPNYGMSQQSDPGFTGATTPQSPIMSPRMGHIQSPMMQQSQASPAYQSELNGWAQGNPAGNSMFSQQSPPHFGQQSGTSMYNSNNMNISVSMAANGNGMNSMNQMTGQINMTSVTSVPTSGLSSMGPEQKYC</sequence>
<accession>B5DE09</accession>
<protein>
    <recommendedName>
        <fullName evidence="3">Nuclear receptor coactivator 2</fullName>
        <shortName evidence="3">NCoA-2</shortName>
    </recommendedName>
    <alternativeName>
        <fullName evidence="3">Transcriptional intermediary factor 2</fullName>
    </alternativeName>
</protein>
<gene>
    <name evidence="3" type="primary">ncoa2</name>
    <name evidence="3" type="synonym">tif2</name>
</gene>